<name>YGFB_SALDC</name>
<proteinExistence type="inferred from homology"/>
<reference key="1">
    <citation type="journal article" date="2011" name="J. Bacteriol.">
        <title>Comparative genomics of 28 Salmonella enterica isolates: evidence for CRISPR-mediated adaptive sublineage evolution.</title>
        <authorList>
            <person name="Fricke W.F."/>
            <person name="Mammel M.K."/>
            <person name="McDermott P.F."/>
            <person name="Tartera C."/>
            <person name="White D.G."/>
            <person name="Leclerc J.E."/>
            <person name="Ravel J."/>
            <person name="Cebula T.A."/>
        </authorList>
    </citation>
    <scope>NUCLEOTIDE SEQUENCE [LARGE SCALE GENOMIC DNA]</scope>
    <source>
        <strain>CT_02021853</strain>
    </source>
</reference>
<evidence type="ECO:0000255" key="1">
    <source>
        <dbReference type="HAMAP-Rule" id="MF_00346"/>
    </source>
</evidence>
<sequence>MSIQNEMPGYNEMNRFLNQQGAGLTPAEMHGLISGMICGGNNDSSWQPLLHDLTNEGLAFGHELAQALRKMHAATSDALEDDGFLFQLYLPEGDDVSVFDRADALAGWVNHFLLGLGVTQPKLDKVTGETGEAIDDLRNIAQLGYDESEDQEELEMSLEEIIEYVRVAALLCHDTFTRQQPTAPEVRKPTLH</sequence>
<comment type="similarity">
    <text evidence="1">Belongs to the UPF0149 family.</text>
</comment>
<feature type="chain" id="PRO_1000120479" description="UPF0149 protein YgfB">
    <location>
        <begin position="1"/>
        <end position="192"/>
    </location>
</feature>
<organism>
    <name type="scientific">Salmonella dublin (strain CT_02021853)</name>
    <dbReference type="NCBI Taxonomy" id="439851"/>
    <lineage>
        <taxon>Bacteria</taxon>
        <taxon>Pseudomonadati</taxon>
        <taxon>Pseudomonadota</taxon>
        <taxon>Gammaproteobacteria</taxon>
        <taxon>Enterobacterales</taxon>
        <taxon>Enterobacteriaceae</taxon>
        <taxon>Salmonella</taxon>
    </lineage>
</organism>
<dbReference type="EMBL" id="CP001144">
    <property type="protein sequence ID" value="ACH74934.1"/>
    <property type="molecule type" value="Genomic_DNA"/>
</dbReference>
<dbReference type="SMR" id="B5FUH3"/>
<dbReference type="KEGG" id="sed:SeD_A3397"/>
<dbReference type="HOGENOM" id="CLU_085336_1_0_6"/>
<dbReference type="Proteomes" id="UP000008322">
    <property type="component" value="Chromosome"/>
</dbReference>
<dbReference type="GO" id="GO:0005829">
    <property type="term" value="C:cytosol"/>
    <property type="evidence" value="ECO:0007669"/>
    <property type="project" value="TreeGrafter"/>
</dbReference>
<dbReference type="FunFam" id="1.20.120.740:FF:000001">
    <property type="entry name" value="UPF0149 protein YgfB"/>
    <property type="match status" value="1"/>
</dbReference>
<dbReference type="Gene3D" id="1.20.120.740">
    <property type="entry name" value="YgfB uncharacterised protein family UPF0149, PF03695"/>
    <property type="match status" value="1"/>
</dbReference>
<dbReference type="HAMAP" id="MF_00346">
    <property type="entry name" value="UPF0149"/>
    <property type="match status" value="1"/>
</dbReference>
<dbReference type="InterPro" id="IPR011978">
    <property type="entry name" value="YgfB-like"/>
</dbReference>
<dbReference type="InterPro" id="IPR036255">
    <property type="entry name" value="YgfB-like_sf"/>
</dbReference>
<dbReference type="NCBIfam" id="NF002477">
    <property type="entry name" value="PRK01736.1"/>
    <property type="match status" value="1"/>
</dbReference>
<dbReference type="NCBIfam" id="TIGR02292">
    <property type="entry name" value="ygfB_yecA"/>
    <property type="match status" value="1"/>
</dbReference>
<dbReference type="PANTHER" id="PTHR37528">
    <property type="entry name" value="UPF0149 PROTEIN YGFB"/>
    <property type="match status" value="1"/>
</dbReference>
<dbReference type="PANTHER" id="PTHR37528:SF1">
    <property type="entry name" value="UPF0149 PROTEIN YGFB"/>
    <property type="match status" value="1"/>
</dbReference>
<dbReference type="Pfam" id="PF03695">
    <property type="entry name" value="UPF0149"/>
    <property type="match status" value="1"/>
</dbReference>
<dbReference type="SUPFAM" id="SSF101327">
    <property type="entry name" value="YgfB-like"/>
    <property type="match status" value="1"/>
</dbReference>
<protein>
    <recommendedName>
        <fullName evidence="1">UPF0149 protein YgfB</fullName>
    </recommendedName>
</protein>
<accession>B5FUH3</accession>
<gene>
    <name evidence="1" type="primary">ygfB</name>
    <name type="ordered locus">SeD_A3397</name>
</gene>